<sequence>MAHGPGALMLKCVVVGDGAVGKTCLLMSYANDAFPEEYVPTVFDHYAVSVTVGGKQYLLGLYDTAGQEDYDRLRPLSYPMTDVFLICFSVVNPASFQNVKEEWVPELKEYAPNVPFLLIGTQIDLRDDPKTLARLNDMKEKPVCVEQGQKLAKEIGACCYVECSALTQKGLKTVFDEAIIAILTPKKHTVKKRIGSRCINCCLIT</sequence>
<keyword id="KW-1003">Cell membrane</keyword>
<keyword id="KW-0963">Cytoplasm</keyword>
<keyword id="KW-0342">GTP-binding</keyword>
<keyword id="KW-0449">Lipoprotein</keyword>
<keyword id="KW-0472">Membrane</keyword>
<keyword id="KW-0488">Methylation</keyword>
<keyword id="KW-0547">Nucleotide-binding</keyword>
<keyword id="KW-0636">Prenylation</keyword>
<keyword id="KW-1185">Reference proteome</keyword>
<protein>
    <recommendedName>
        <fullName>Rho-related GTP-binding protein RhoQ</fullName>
    </recommendedName>
    <alternativeName>
        <fullName>Ras-like protein TC10</fullName>
    </alternativeName>
</protein>
<dbReference type="EMBL" id="AB060650">
    <property type="protein sequence ID" value="BAB91068.1"/>
    <property type="molecule type" value="mRNA"/>
</dbReference>
<dbReference type="EMBL" id="BC048813">
    <property type="protein sequence ID" value="AAH48813.2"/>
    <property type="molecule type" value="mRNA"/>
</dbReference>
<dbReference type="EMBL" id="BC056363">
    <property type="protein sequence ID" value="AAH56363.1"/>
    <property type="molecule type" value="mRNA"/>
</dbReference>
<dbReference type="CCDS" id="CCDS29010.1"/>
<dbReference type="RefSeq" id="NP_663466.2">
    <property type="nucleotide sequence ID" value="NM_145491.2"/>
</dbReference>
<dbReference type="SMR" id="Q8R527"/>
<dbReference type="BioGRID" id="222463">
    <property type="interactions" value="2"/>
</dbReference>
<dbReference type="FunCoup" id="Q8R527">
    <property type="interactions" value="493"/>
</dbReference>
<dbReference type="STRING" id="10090.ENSMUSP00000024956"/>
<dbReference type="GlyGen" id="Q8R527">
    <property type="glycosylation" value="1 site"/>
</dbReference>
<dbReference type="iPTMnet" id="Q8R527"/>
<dbReference type="PhosphoSitePlus" id="Q8R527"/>
<dbReference type="SwissPalm" id="Q8R527"/>
<dbReference type="jPOST" id="Q8R527"/>
<dbReference type="PaxDb" id="10090-ENSMUSP00000024956"/>
<dbReference type="PeptideAtlas" id="Q8R527"/>
<dbReference type="ProteomicsDB" id="253124"/>
<dbReference type="Pumba" id="Q8R527"/>
<dbReference type="Antibodypedia" id="29975">
    <property type="antibodies" value="155 antibodies from 30 providers"/>
</dbReference>
<dbReference type="DNASU" id="104215"/>
<dbReference type="Ensembl" id="ENSMUST00000024956.15">
    <property type="protein sequence ID" value="ENSMUSP00000024956.9"/>
    <property type="gene ID" value="ENSMUSG00000024143.16"/>
</dbReference>
<dbReference type="GeneID" id="104215"/>
<dbReference type="KEGG" id="mmu:104215"/>
<dbReference type="UCSC" id="uc008dum.1">
    <property type="organism name" value="mouse"/>
</dbReference>
<dbReference type="AGR" id="MGI:1931553"/>
<dbReference type="CTD" id="23433"/>
<dbReference type="MGI" id="MGI:1931553">
    <property type="gene designation" value="Rhoq"/>
</dbReference>
<dbReference type="VEuPathDB" id="HostDB:ENSMUSG00000024143"/>
<dbReference type="eggNOG" id="KOG0393">
    <property type="taxonomic scope" value="Eukaryota"/>
</dbReference>
<dbReference type="GeneTree" id="ENSGT00940000155970"/>
<dbReference type="HOGENOM" id="CLU_041217_21_3_1"/>
<dbReference type="InParanoid" id="Q8R527"/>
<dbReference type="OMA" id="AESYAEC"/>
<dbReference type="OrthoDB" id="8830751at2759"/>
<dbReference type="PhylomeDB" id="Q8R527"/>
<dbReference type="TreeFam" id="TF101109"/>
<dbReference type="Reactome" id="R-MMU-5627083">
    <property type="pathway name" value="RHO GTPases regulate CFTR trafficking"/>
</dbReference>
<dbReference type="Reactome" id="R-MMU-9013406">
    <property type="pathway name" value="RHOQ GTPase cycle"/>
</dbReference>
<dbReference type="BioGRID-ORCS" id="104215">
    <property type="hits" value="0 hits in 79 CRISPR screens"/>
</dbReference>
<dbReference type="ChiTaRS" id="Rhoq">
    <property type="organism name" value="mouse"/>
</dbReference>
<dbReference type="PRO" id="PR:Q8R527"/>
<dbReference type="Proteomes" id="UP000000589">
    <property type="component" value="Chromosome 17"/>
</dbReference>
<dbReference type="RNAct" id="Q8R527">
    <property type="molecule type" value="protein"/>
</dbReference>
<dbReference type="Bgee" id="ENSMUSG00000024143">
    <property type="expression patterns" value="Expressed in parotid gland and 251 other cell types or tissues"/>
</dbReference>
<dbReference type="ExpressionAtlas" id="Q8R527">
    <property type="expression patterns" value="baseline and differential"/>
</dbReference>
<dbReference type="GO" id="GO:0005884">
    <property type="term" value="C:actin filament"/>
    <property type="evidence" value="ECO:0007669"/>
    <property type="project" value="Ensembl"/>
</dbReference>
<dbReference type="GO" id="GO:0005737">
    <property type="term" value="C:cytoplasm"/>
    <property type="evidence" value="ECO:0007669"/>
    <property type="project" value="UniProtKB-SubCell"/>
</dbReference>
<dbReference type="GO" id="GO:0045121">
    <property type="term" value="C:membrane raft"/>
    <property type="evidence" value="ECO:0000314"/>
    <property type="project" value="BHF-UCL"/>
</dbReference>
<dbReference type="GO" id="GO:0005886">
    <property type="term" value="C:plasma membrane"/>
    <property type="evidence" value="ECO:0007669"/>
    <property type="project" value="UniProtKB-SubCell"/>
</dbReference>
<dbReference type="GO" id="GO:0032427">
    <property type="term" value="F:GBD domain binding"/>
    <property type="evidence" value="ECO:0007669"/>
    <property type="project" value="Ensembl"/>
</dbReference>
<dbReference type="GO" id="GO:0005525">
    <property type="term" value="F:GTP binding"/>
    <property type="evidence" value="ECO:0007669"/>
    <property type="project" value="UniProtKB-KW"/>
</dbReference>
<dbReference type="GO" id="GO:0003924">
    <property type="term" value="F:GTPase activity"/>
    <property type="evidence" value="ECO:0000304"/>
    <property type="project" value="MGI"/>
</dbReference>
<dbReference type="GO" id="GO:0005522">
    <property type="term" value="F:profilin binding"/>
    <property type="evidence" value="ECO:0007669"/>
    <property type="project" value="Ensembl"/>
</dbReference>
<dbReference type="GO" id="GO:0030036">
    <property type="term" value="P:actin cytoskeleton organization"/>
    <property type="evidence" value="ECO:0000304"/>
    <property type="project" value="MGI"/>
</dbReference>
<dbReference type="GO" id="GO:0032869">
    <property type="term" value="P:cellular response to insulin stimulus"/>
    <property type="evidence" value="ECO:0000315"/>
    <property type="project" value="BHF-UCL"/>
</dbReference>
<dbReference type="GO" id="GO:0030866">
    <property type="term" value="P:cortical actin cytoskeleton organization"/>
    <property type="evidence" value="ECO:0000315"/>
    <property type="project" value="BHF-UCL"/>
</dbReference>
<dbReference type="GO" id="GO:0046039">
    <property type="term" value="P:GTP metabolic process"/>
    <property type="evidence" value="ECO:0007669"/>
    <property type="project" value="Ensembl"/>
</dbReference>
<dbReference type="GO" id="GO:0008286">
    <property type="term" value="P:insulin receptor signaling pathway"/>
    <property type="evidence" value="ECO:0007669"/>
    <property type="project" value="Ensembl"/>
</dbReference>
<dbReference type="GO" id="GO:0046325">
    <property type="term" value="P:negative regulation of D-glucose import"/>
    <property type="evidence" value="ECO:0000305"/>
    <property type="project" value="BHF-UCL"/>
</dbReference>
<dbReference type="GO" id="GO:1903077">
    <property type="term" value="P:negative regulation of protein localization to plasma membrane"/>
    <property type="evidence" value="ECO:0000314"/>
    <property type="project" value="BHF-UCL"/>
</dbReference>
<dbReference type="GO" id="GO:0046326">
    <property type="term" value="P:positive regulation of D-glucose import"/>
    <property type="evidence" value="ECO:0007669"/>
    <property type="project" value="Ensembl"/>
</dbReference>
<dbReference type="GO" id="GO:0051491">
    <property type="term" value="P:positive regulation of filopodium assembly"/>
    <property type="evidence" value="ECO:0007669"/>
    <property type="project" value="Ensembl"/>
</dbReference>
<dbReference type="GO" id="GO:0045944">
    <property type="term" value="P:positive regulation of transcription by RNA polymerase II"/>
    <property type="evidence" value="ECO:0007669"/>
    <property type="project" value="Ensembl"/>
</dbReference>
<dbReference type="GO" id="GO:0008360">
    <property type="term" value="P:regulation of cell shape"/>
    <property type="evidence" value="ECO:0000314"/>
    <property type="project" value="MGI"/>
</dbReference>
<dbReference type="GO" id="GO:0007264">
    <property type="term" value="P:small GTPase-mediated signal transduction"/>
    <property type="evidence" value="ECO:0007669"/>
    <property type="project" value="InterPro"/>
</dbReference>
<dbReference type="CDD" id="cd04135">
    <property type="entry name" value="Tc10"/>
    <property type="match status" value="1"/>
</dbReference>
<dbReference type="FunFam" id="3.40.50.300:FF:000438">
    <property type="entry name" value="Rho-related GTP-binding protein RhoJ"/>
    <property type="match status" value="1"/>
</dbReference>
<dbReference type="Gene3D" id="3.40.50.300">
    <property type="entry name" value="P-loop containing nucleotide triphosphate hydrolases"/>
    <property type="match status" value="1"/>
</dbReference>
<dbReference type="InterPro" id="IPR027417">
    <property type="entry name" value="P-loop_NTPase"/>
</dbReference>
<dbReference type="InterPro" id="IPR005225">
    <property type="entry name" value="Small_GTP-bd"/>
</dbReference>
<dbReference type="InterPro" id="IPR001806">
    <property type="entry name" value="Small_GTPase"/>
</dbReference>
<dbReference type="InterPro" id="IPR003578">
    <property type="entry name" value="Small_GTPase_Rho"/>
</dbReference>
<dbReference type="NCBIfam" id="TIGR00231">
    <property type="entry name" value="small_GTP"/>
    <property type="match status" value="1"/>
</dbReference>
<dbReference type="PANTHER" id="PTHR24072">
    <property type="entry name" value="RHO FAMILY GTPASE"/>
    <property type="match status" value="1"/>
</dbReference>
<dbReference type="Pfam" id="PF00071">
    <property type="entry name" value="Ras"/>
    <property type="match status" value="1"/>
</dbReference>
<dbReference type="PRINTS" id="PR00449">
    <property type="entry name" value="RASTRNSFRMNG"/>
</dbReference>
<dbReference type="SMART" id="SM00175">
    <property type="entry name" value="RAB"/>
    <property type="match status" value="1"/>
</dbReference>
<dbReference type="SMART" id="SM00173">
    <property type="entry name" value="RAS"/>
    <property type="match status" value="1"/>
</dbReference>
<dbReference type="SMART" id="SM00174">
    <property type="entry name" value="RHO"/>
    <property type="match status" value="1"/>
</dbReference>
<dbReference type="SUPFAM" id="SSF52540">
    <property type="entry name" value="P-loop containing nucleoside triphosphate hydrolases"/>
    <property type="match status" value="1"/>
</dbReference>
<dbReference type="PROSITE" id="PS51420">
    <property type="entry name" value="RHO"/>
    <property type="match status" value="1"/>
</dbReference>
<organism>
    <name type="scientific">Mus musculus</name>
    <name type="common">Mouse</name>
    <dbReference type="NCBI Taxonomy" id="10090"/>
    <lineage>
        <taxon>Eukaryota</taxon>
        <taxon>Metazoa</taxon>
        <taxon>Chordata</taxon>
        <taxon>Craniata</taxon>
        <taxon>Vertebrata</taxon>
        <taxon>Euteleostomi</taxon>
        <taxon>Mammalia</taxon>
        <taxon>Eutheria</taxon>
        <taxon>Euarchontoglires</taxon>
        <taxon>Glires</taxon>
        <taxon>Rodentia</taxon>
        <taxon>Myomorpha</taxon>
        <taxon>Muroidea</taxon>
        <taxon>Muridae</taxon>
        <taxon>Murinae</taxon>
        <taxon>Mus</taxon>
        <taxon>Mus</taxon>
    </lineage>
</organism>
<accession>Q8R527</accession>
<accession>Q7TNC0</accession>
<accession>Q80VH4</accession>
<name>RHOQ_MOUSE</name>
<reference key="1">
    <citation type="journal article" date="2003" name="J. Cell Sci.">
        <title>Small GTPase Tc10 and its homologue RhoT induce N-WASP-mediated long process formation and neurite outgrowth.</title>
        <authorList>
            <person name="Abe T."/>
            <person name="Kato M."/>
            <person name="Miki H."/>
            <person name="Takenawa T."/>
            <person name="Endo T."/>
        </authorList>
    </citation>
    <scope>NUCLEOTIDE SEQUENCE [MRNA]</scope>
</reference>
<reference key="2">
    <citation type="journal article" date="2004" name="Genome Res.">
        <title>The status, quality, and expansion of the NIH full-length cDNA project: the Mammalian Gene Collection (MGC).</title>
        <authorList>
            <consortium name="The MGC Project Team"/>
        </authorList>
    </citation>
    <scope>NUCLEOTIDE SEQUENCE [LARGE SCALE MRNA]</scope>
    <source>
        <strain>C57BL/6J</strain>
        <strain>FVB/N</strain>
        <tissue>Mammary gland</tissue>
    </source>
</reference>
<reference key="3">
    <citation type="journal article" date="2003" name="EMBO J.">
        <title>TCGAP, a multidomain Rho GTPase-activating protein involved in insulin-stimulated glucose transport.</title>
        <authorList>
            <person name="Chiang S.-H."/>
            <person name="Hwang J."/>
            <person name="Legendre M."/>
            <person name="Zhang M."/>
            <person name="Kimura A."/>
            <person name="Saltiel A.R."/>
        </authorList>
    </citation>
    <scope>INTERACTION WITH ARHGAP33/TCGAP</scope>
</reference>
<reference key="4">
    <citation type="journal article" date="1999" name="Mol. Cell. Biol.">
        <title>The Borgs, a new family of Cdc42 and TC10 GTPase-interacting proteins.</title>
        <authorList>
            <person name="Joberty G."/>
            <person name="Perlungher R.R."/>
            <person name="Macara I.G."/>
        </authorList>
    </citation>
    <scope>INTERACTION WITH CDC42EP4</scope>
</reference>
<feature type="chain" id="PRO_0000198872" description="Rho-related GTP-binding protein RhoQ">
    <location>
        <begin position="1"/>
        <end position="202"/>
    </location>
</feature>
<feature type="propeptide" id="PRO_0000281223" description="Removed in mature form" evidence="1">
    <location>
        <begin position="203"/>
        <end position="205"/>
    </location>
</feature>
<feature type="short sequence motif" description="Effector region" evidence="1">
    <location>
        <begin position="38"/>
        <end position="46"/>
    </location>
</feature>
<feature type="binding site" evidence="1">
    <location>
        <begin position="16"/>
        <end position="23"/>
    </location>
    <ligand>
        <name>GTP</name>
        <dbReference type="ChEBI" id="CHEBI:37565"/>
    </ligand>
</feature>
<feature type="binding site" evidence="1">
    <location>
        <begin position="63"/>
        <end position="67"/>
    </location>
    <ligand>
        <name>GTP</name>
        <dbReference type="ChEBI" id="CHEBI:37565"/>
    </ligand>
</feature>
<feature type="binding site" evidence="1">
    <location>
        <begin position="121"/>
        <end position="124"/>
    </location>
    <ligand>
        <name>GTP</name>
        <dbReference type="ChEBI" id="CHEBI:37565"/>
    </ligand>
</feature>
<feature type="modified residue" description="Cysteine methyl ester" evidence="1">
    <location>
        <position position="202"/>
    </location>
</feature>
<feature type="lipid moiety-binding region" description="S-farnesyl cysteine" evidence="1">
    <location>
        <position position="202"/>
    </location>
</feature>
<feature type="sequence conflict" description="In Ref. 1; BAB91068." evidence="4" ref="1">
    <original>V</original>
    <variation>I</variation>
    <location>
        <position position="114"/>
    </location>
</feature>
<proteinExistence type="evidence at protein level"/>
<comment type="function">
    <text evidence="1">Plasma membrane-associated small GTPase which cycles between an active GTP-bound and an inactive GDP-bound state. In active state binds to a variety of effector proteins to regulate cellular responses. Involved in epithelial cell polarization processes. May play a role in CFTR trafficking to the plasma membrane. Causes the formation of thin, actin-rich surface projections called filopodia (By similarity).</text>
</comment>
<comment type="activity regulation">
    <text evidence="1">Regulated by guanine nucleotide exchange factors (GEFs) which promote the exchange of bound GDP for free GTP, GTPase activating proteins (GAPs) which increase the GTP hydrolysis activity, and GDP dissociation inhibitors which inhibit the dissociation of the nucleotide from the GTPase.</text>
</comment>
<comment type="subunit">
    <text evidence="1 2 3">Interacts with EXO70, CDC42EP1, CDC42EP2 and CDC42EP3 in a GTP-dependent manner (By similarity). Interacts with CDC42EP4, PARD6A, PARD6G (and probably PARD6B) in a GTP-dependent manner. Part of a quaternary complex containing PARD3, some PARD6 protein (PARD6A, PARD6B or PARD6G) and some atypical PKC protein (PRKCI or PRKCZ). Interacts with GOPC (By similarity). Interacts with ARHGAP33/TCGAP.</text>
</comment>
<comment type="subcellular location">
    <subcellularLocation>
        <location evidence="1">Cytoplasm</location>
    </subcellularLocation>
    <subcellularLocation>
        <location evidence="1">Cell membrane</location>
        <topology evidence="1">Lipid-anchor</topology>
    </subcellularLocation>
</comment>
<comment type="PTM">
    <text evidence="1">May be post-translationally modified by both palmitoylation and polyisoprenylation.</text>
</comment>
<comment type="similarity">
    <text evidence="4">Belongs to the small GTPase superfamily. Rho family.</text>
</comment>
<gene>
    <name type="primary">Rhoq</name>
    <name type="synonym">Arhq</name>
    <name type="synonym">Tc10</name>
</gene>
<evidence type="ECO:0000250" key="1"/>
<evidence type="ECO:0000269" key="2">
    <source>
    </source>
</evidence>
<evidence type="ECO:0000269" key="3">
    <source>
    </source>
</evidence>
<evidence type="ECO:0000305" key="4"/>